<comment type="function">
    <text evidence="1">Produces ATP from ADP in the presence of a proton gradient across the membrane. The catalytic sites are hosted primarily by the beta subunits.</text>
</comment>
<comment type="catalytic activity">
    <reaction evidence="1">
        <text>ATP + H2O + 4 H(+)(in) = ADP + phosphate + 5 H(+)(out)</text>
        <dbReference type="Rhea" id="RHEA:57720"/>
        <dbReference type="ChEBI" id="CHEBI:15377"/>
        <dbReference type="ChEBI" id="CHEBI:15378"/>
        <dbReference type="ChEBI" id="CHEBI:30616"/>
        <dbReference type="ChEBI" id="CHEBI:43474"/>
        <dbReference type="ChEBI" id="CHEBI:456216"/>
        <dbReference type="EC" id="7.1.2.2"/>
    </reaction>
</comment>
<comment type="subunit">
    <text evidence="1">F-type ATPases have 2 components, CF(1) - the catalytic core - and CF(0) - the membrane proton channel. CF(1) has five subunits: alpha(3), beta(3), gamma(1), delta(1), epsilon(1). CF(0) has three main subunits: a(1), b(2) and c(9-12). The alpha and beta chains form an alternating ring which encloses part of the gamma chain. CF(1) is attached to CF(0) by a central stalk formed by the gamma and epsilon chains, while a peripheral stalk is formed by the delta and b chains.</text>
</comment>
<comment type="subcellular location">
    <subcellularLocation>
        <location evidence="1">Cell inner membrane</location>
        <topology evidence="1">Peripheral membrane protein</topology>
    </subcellularLocation>
</comment>
<comment type="similarity">
    <text evidence="1">Belongs to the ATPase alpha/beta chains family.</text>
</comment>
<protein>
    <recommendedName>
        <fullName evidence="1">ATP synthase subunit beta</fullName>
        <ecNumber evidence="1">7.1.2.2</ecNumber>
    </recommendedName>
    <alternativeName>
        <fullName evidence="1">ATP synthase F1 sector subunit beta</fullName>
    </alternativeName>
    <alternativeName>
        <fullName evidence="1">F-ATPase subunit beta</fullName>
    </alternativeName>
</protein>
<accession>B0BRX2</accession>
<organism>
    <name type="scientific">Actinobacillus pleuropneumoniae serotype 3 (strain JL03)</name>
    <dbReference type="NCBI Taxonomy" id="434271"/>
    <lineage>
        <taxon>Bacteria</taxon>
        <taxon>Pseudomonadati</taxon>
        <taxon>Pseudomonadota</taxon>
        <taxon>Gammaproteobacteria</taxon>
        <taxon>Pasteurellales</taxon>
        <taxon>Pasteurellaceae</taxon>
        <taxon>Actinobacillus</taxon>
    </lineage>
</organism>
<proteinExistence type="inferred from homology"/>
<feature type="chain" id="PRO_1000143466" description="ATP synthase subunit beta">
    <location>
        <begin position="1"/>
        <end position="457"/>
    </location>
</feature>
<feature type="binding site" evidence="1">
    <location>
        <begin position="147"/>
        <end position="154"/>
    </location>
    <ligand>
        <name>ATP</name>
        <dbReference type="ChEBI" id="CHEBI:30616"/>
    </ligand>
</feature>
<name>ATPB_ACTPJ</name>
<reference key="1">
    <citation type="journal article" date="2008" name="PLoS ONE">
        <title>Genome biology of Actinobacillus pleuropneumoniae JL03, an isolate of serotype 3 prevalent in China.</title>
        <authorList>
            <person name="Xu Z."/>
            <person name="Zhou Y."/>
            <person name="Li L."/>
            <person name="Zhou R."/>
            <person name="Xiao S."/>
            <person name="Wan Y."/>
            <person name="Zhang S."/>
            <person name="Wang K."/>
            <person name="Li W."/>
            <person name="Li L."/>
            <person name="Jin H."/>
            <person name="Kang M."/>
            <person name="Dalai B."/>
            <person name="Li T."/>
            <person name="Liu L."/>
            <person name="Cheng Y."/>
            <person name="Zhang L."/>
            <person name="Xu T."/>
            <person name="Zheng H."/>
            <person name="Pu S."/>
            <person name="Wang B."/>
            <person name="Gu W."/>
            <person name="Zhang X.L."/>
            <person name="Zhu G.-F."/>
            <person name="Wang S."/>
            <person name="Zhao G.-P."/>
            <person name="Chen H."/>
        </authorList>
    </citation>
    <scope>NUCLEOTIDE SEQUENCE [LARGE SCALE GENOMIC DNA]</scope>
    <source>
        <strain>JL03</strain>
    </source>
</reference>
<sequence>MATGKIVQIIGAVIDVEFPQDAVPKVYDALKVESGLTLEVQQQLGGGLVRCIALGTSDGLKRGLKVENTGNPIQVPVGTKTLGRIMNVLGEPIDEKGPIGEEARWDIHRAAPSYEEQSNSTELLETGIKVIDLICPFAKGGKVGLFGGAGVGKTVNMMELIRNIAIEHSGYSVFAGVGERTREGNDFYHEMTDSNVLDKVSLVYGQMNEPPGNRLRVALTGLTMAEKFRDEGRDVLFFVDNIYRYTLAGTEVSALLGRMPSAVGYQPTLAEEMGVLQERITSTKTGSITSVQAVYVPADDLTDPSPATTFAHLDSTVVLSRNIASLGIYPAVDPLDSTSRQLDPLVVGEEHYNVARGVQGTLQRYKELKDIIAILGMDELSEDDKLVVARARKIERFLSQPFFVAEVFTGSQGKYVSLKDTIRGFKGILEGEFDHIPEQAFYMAGSIDEVVERASKM</sequence>
<dbReference type="EC" id="7.1.2.2" evidence="1"/>
<dbReference type="EMBL" id="CP000687">
    <property type="protein sequence ID" value="ABY70231.1"/>
    <property type="molecule type" value="Genomic_DNA"/>
</dbReference>
<dbReference type="RefSeq" id="WP_012263330.1">
    <property type="nucleotide sequence ID" value="NC_010278.1"/>
</dbReference>
<dbReference type="SMR" id="B0BRX2"/>
<dbReference type="KEGG" id="apj:APJL_1679"/>
<dbReference type="HOGENOM" id="CLU_022398_0_2_6"/>
<dbReference type="Proteomes" id="UP000008547">
    <property type="component" value="Chromosome"/>
</dbReference>
<dbReference type="GO" id="GO:0005886">
    <property type="term" value="C:plasma membrane"/>
    <property type="evidence" value="ECO:0007669"/>
    <property type="project" value="UniProtKB-SubCell"/>
</dbReference>
<dbReference type="GO" id="GO:0045259">
    <property type="term" value="C:proton-transporting ATP synthase complex"/>
    <property type="evidence" value="ECO:0007669"/>
    <property type="project" value="UniProtKB-KW"/>
</dbReference>
<dbReference type="GO" id="GO:0005524">
    <property type="term" value="F:ATP binding"/>
    <property type="evidence" value="ECO:0007669"/>
    <property type="project" value="UniProtKB-UniRule"/>
</dbReference>
<dbReference type="GO" id="GO:0016887">
    <property type="term" value="F:ATP hydrolysis activity"/>
    <property type="evidence" value="ECO:0007669"/>
    <property type="project" value="InterPro"/>
</dbReference>
<dbReference type="GO" id="GO:0046933">
    <property type="term" value="F:proton-transporting ATP synthase activity, rotational mechanism"/>
    <property type="evidence" value="ECO:0007669"/>
    <property type="project" value="UniProtKB-UniRule"/>
</dbReference>
<dbReference type="CDD" id="cd18110">
    <property type="entry name" value="ATP-synt_F1_beta_C"/>
    <property type="match status" value="1"/>
</dbReference>
<dbReference type="CDD" id="cd18115">
    <property type="entry name" value="ATP-synt_F1_beta_N"/>
    <property type="match status" value="1"/>
</dbReference>
<dbReference type="CDD" id="cd01133">
    <property type="entry name" value="F1-ATPase_beta_CD"/>
    <property type="match status" value="1"/>
</dbReference>
<dbReference type="FunFam" id="1.10.1140.10:FF:000001">
    <property type="entry name" value="ATP synthase subunit beta"/>
    <property type="match status" value="1"/>
</dbReference>
<dbReference type="FunFam" id="2.40.10.170:FF:000003">
    <property type="entry name" value="ATP synthase subunit beta"/>
    <property type="match status" value="1"/>
</dbReference>
<dbReference type="FunFam" id="3.40.50.300:FF:000004">
    <property type="entry name" value="ATP synthase subunit beta"/>
    <property type="match status" value="1"/>
</dbReference>
<dbReference type="Gene3D" id="2.40.10.170">
    <property type="match status" value="1"/>
</dbReference>
<dbReference type="Gene3D" id="1.10.1140.10">
    <property type="entry name" value="Bovine Mitochondrial F1-atpase, Atp Synthase Beta Chain, Chain D, domain 3"/>
    <property type="match status" value="1"/>
</dbReference>
<dbReference type="Gene3D" id="3.40.50.300">
    <property type="entry name" value="P-loop containing nucleotide triphosphate hydrolases"/>
    <property type="match status" value="1"/>
</dbReference>
<dbReference type="HAMAP" id="MF_01347">
    <property type="entry name" value="ATP_synth_beta_bact"/>
    <property type="match status" value="1"/>
</dbReference>
<dbReference type="InterPro" id="IPR003593">
    <property type="entry name" value="AAA+_ATPase"/>
</dbReference>
<dbReference type="InterPro" id="IPR055190">
    <property type="entry name" value="ATP-synt_VA_C"/>
</dbReference>
<dbReference type="InterPro" id="IPR005722">
    <property type="entry name" value="ATP_synth_F1_bsu"/>
</dbReference>
<dbReference type="InterPro" id="IPR020003">
    <property type="entry name" value="ATPase_a/bsu_AS"/>
</dbReference>
<dbReference type="InterPro" id="IPR050053">
    <property type="entry name" value="ATPase_alpha/beta_chains"/>
</dbReference>
<dbReference type="InterPro" id="IPR004100">
    <property type="entry name" value="ATPase_F1/V1/A1_a/bsu_N"/>
</dbReference>
<dbReference type="InterPro" id="IPR036121">
    <property type="entry name" value="ATPase_F1/V1/A1_a/bsu_N_sf"/>
</dbReference>
<dbReference type="InterPro" id="IPR000194">
    <property type="entry name" value="ATPase_F1/V1/A1_a/bsu_nucl-bd"/>
</dbReference>
<dbReference type="InterPro" id="IPR024034">
    <property type="entry name" value="ATPase_F1/V1_b/a_C"/>
</dbReference>
<dbReference type="InterPro" id="IPR027417">
    <property type="entry name" value="P-loop_NTPase"/>
</dbReference>
<dbReference type="NCBIfam" id="TIGR01039">
    <property type="entry name" value="atpD"/>
    <property type="match status" value="1"/>
</dbReference>
<dbReference type="PANTHER" id="PTHR15184">
    <property type="entry name" value="ATP SYNTHASE"/>
    <property type="match status" value="1"/>
</dbReference>
<dbReference type="PANTHER" id="PTHR15184:SF71">
    <property type="entry name" value="ATP SYNTHASE SUBUNIT BETA, MITOCHONDRIAL"/>
    <property type="match status" value="1"/>
</dbReference>
<dbReference type="Pfam" id="PF00006">
    <property type="entry name" value="ATP-synt_ab"/>
    <property type="match status" value="1"/>
</dbReference>
<dbReference type="Pfam" id="PF02874">
    <property type="entry name" value="ATP-synt_ab_N"/>
    <property type="match status" value="1"/>
</dbReference>
<dbReference type="Pfam" id="PF22919">
    <property type="entry name" value="ATP-synt_VA_C"/>
    <property type="match status" value="1"/>
</dbReference>
<dbReference type="SMART" id="SM00382">
    <property type="entry name" value="AAA"/>
    <property type="match status" value="1"/>
</dbReference>
<dbReference type="SUPFAM" id="SSF47917">
    <property type="entry name" value="C-terminal domain of alpha and beta subunits of F1 ATP synthase"/>
    <property type="match status" value="1"/>
</dbReference>
<dbReference type="SUPFAM" id="SSF50615">
    <property type="entry name" value="N-terminal domain of alpha and beta subunits of F1 ATP synthase"/>
    <property type="match status" value="1"/>
</dbReference>
<dbReference type="SUPFAM" id="SSF52540">
    <property type="entry name" value="P-loop containing nucleoside triphosphate hydrolases"/>
    <property type="match status" value="1"/>
</dbReference>
<dbReference type="PROSITE" id="PS00152">
    <property type="entry name" value="ATPASE_ALPHA_BETA"/>
    <property type="match status" value="1"/>
</dbReference>
<evidence type="ECO:0000255" key="1">
    <source>
        <dbReference type="HAMAP-Rule" id="MF_01347"/>
    </source>
</evidence>
<keyword id="KW-0066">ATP synthesis</keyword>
<keyword id="KW-0067">ATP-binding</keyword>
<keyword id="KW-0997">Cell inner membrane</keyword>
<keyword id="KW-1003">Cell membrane</keyword>
<keyword id="KW-0139">CF(1)</keyword>
<keyword id="KW-0375">Hydrogen ion transport</keyword>
<keyword id="KW-0406">Ion transport</keyword>
<keyword id="KW-0472">Membrane</keyword>
<keyword id="KW-0547">Nucleotide-binding</keyword>
<keyword id="KW-1278">Translocase</keyword>
<keyword id="KW-0813">Transport</keyword>
<gene>
    <name evidence="1" type="primary">atpD</name>
    <name type="ordered locus">APJL_1679</name>
</gene>